<protein>
    <recommendedName>
        <fullName>Putative lipid kinase SP_1045</fullName>
        <ecNumber>2.7.1.-</ecNumber>
    </recommendedName>
</protein>
<accession>Q97QZ6</accession>
<organism>
    <name type="scientific">Streptococcus pneumoniae serotype 4 (strain ATCC BAA-334 / TIGR4)</name>
    <dbReference type="NCBI Taxonomy" id="170187"/>
    <lineage>
        <taxon>Bacteria</taxon>
        <taxon>Bacillati</taxon>
        <taxon>Bacillota</taxon>
        <taxon>Bacilli</taxon>
        <taxon>Lactobacillales</taxon>
        <taxon>Streptococcaceae</taxon>
        <taxon>Streptococcus</taxon>
    </lineage>
</organism>
<sequence>MKKAMVIINPTSGGEKALDYKEKLENKAKEYFEYVETKITEKALDATHFAEEASREQYDAVVVFGGDGTVNEVISGIDERDYIPKLGIIPGGTGNLITKLLEINQDIDGAIDELDFDLTNKIDIGKANDNYFGYIFSIGSLPEAIHNVEIEDKTKFGILTYAVNTMKSVMTDQVFNIKVETENGNYVGEASHVLVLLTNYFADKKIFEENKDGYANILILKDASIFSKLSVIPDLLKGDVVANDNIEYIKARNIKISSDSELESDVDGDKSDNLPVEIKVLAQRVEVFSKPKED</sequence>
<evidence type="ECO:0000250" key="1"/>
<evidence type="ECO:0000255" key="2">
    <source>
        <dbReference type="PROSITE-ProRule" id="PRU00783"/>
    </source>
</evidence>
<evidence type="ECO:0000305" key="3"/>
<dbReference type="EC" id="2.7.1.-"/>
<dbReference type="EMBL" id="AE005672">
    <property type="protein sequence ID" value="AAK75160.1"/>
    <property type="molecule type" value="Genomic_DNA"/>
</dbReference>
<dbReference type="PIR" id="G95120">
    <property type="entry name" value="G95120"/>
</dbReference>
<dbReference type="RefSeq" id="WP_000710115.1">
    <property type="nucleotide sequence ID" value="NZ_CP155539.1"/>
</dbReference>
<dbReference type="SMR" id="Q97QZ6"/>
<dbReference type="PaxDb" id="170187-SP_1045"/>
<dbReference type="DNASU" id="931559"/>
<dbReference type="EnsemblBacteria" id="AAK75160">
    <property type="protein sequence ID" value="AAK75160"/>
    <property type="gene ID" value="SP_1045"/>
</dbReference>
<dbReference type="KEGG" id="spn:SP_1045"/>
<dbReference type="eggNOG" id="COG1597">
    <property type="taxonomic scope" value="Bacteria"/>
</dbReference>
<dbReference type="PhylomeDB" id="Q97QZ6"/>
<dbReference type="BioCyc" id="SPNE170187:G1FZB-1074-MONOMER"/>
<dbReference type="Proteomes" id="UP000000585">
    <property type="component" value="Chromosome"/>
</dbReference>
<dbReference type="GO" id="GO:0005886">
    <property type="term" value="C:plasma membrane"/>
    <property type="evidence" value="ECO:0007669"/>
    <property type="project" value="TreeGrafter"/>
</dbReference>
<dbReference type="GO" id="GO:0005524">
    <property type="term" value="F:ATP binding"/>
    <property type="evidence" value="ECO:0007669"/>
    <property type="project" value="UniProtKB-KW"/>
</dbReference>
<dbReference type="GO" id="GO:0004143">
    <property type="term" value="F:ATP-dependent diacylglycerol kinase activity"/>
    <property type="evidence" value="ECO:0007669"/>
    <property type="project" value="TreeGrafter"/>
</dbReference>
<dbReference type="GO" id="GO:0046872">
    <property type="term" value="F:metal ion binding"/>
    <property type="evidence" value="ECO:0007669"/>
    <property type="project" value="UniProtKB-KW"/>
</dbReference>
<dbReference type="GO" id="GO:0008654">
    <property type="term" value="P:phospholipid biosynthetic process"/>
    <property type="evidence" value="ECO:0007669"/>
    <property type="project" value="UniProtKB-KW"/>
</dbReference>
<dbReference type="Gene3D" id="2.60.200.40">
    <property type="match status" value="1"/>
</dbReference>
<dbReference type="Gene3D" id="3.40.50.10330">
    <property type="entry name" value="Probable inorganic polyphosphate/atp-NAD kinase, domain 1"/>
    <property type="match status" value="1"/>
</dbReference>
<dbReference type="InterPro" id="IPR017438">
    <property type="entry name" value="ATP-NAD_kinase_N"/>
</dbReference>
<dbReference type="InterPro" id="IPR005218">
    <property type="entry name" value="Diacylglycerol/lipid_kinase"/>
</dbReference>
<dbReference type="InterPro" id="IPR001206">
    <property type="entry name" value="Diacylglycerol_kinase_cat_dom"/>
</dbReference>
<dbReference type="InterPro" id="IPR050187">
    <property type="entry name" value="Lipid_Phosphate_FormReg"/>
</dbReference>
<dbReference type="InterPro" id="IPR016064">
    <property type="entry name" value="NAD/diacylglycerol_kinase_sf"/>
</dbReference>
<dbReference type="InterPro" id="IPR045540">
    <property type="entry name" value="YegS/DAGK_C"/>
</dbReference>
<dbReference type="NCBIfam" id="TIGR00147">
    <property type="entry name" value="YegS/Rv2252/BmrU family lipid kinase"/>
    <property type="match status" value="1"/>
</dbReference>
<dbReference type="PANTHER" id="PTHR12358:SF106">
    <property type="entry name" value="LIPID KINASE YEGS"/>
    <property type="match status" value="1"/>
</dbReference>
<dbReference type="PANTHER" id="PTHR12358">
    <property type="entry name" value="SPHINGOSINE KINASE"/>
    <property type="match status" value="1"/>
</dbReference>
<dbReference type="Pfam" id="PF00781">
    <property type="entry name" value="DAGK_cat"/>
    <property type="match status" value="1"/>
</dbReference>
<dbReference type="Pfam" id="PF19279">
    <property type="entry name" value="YegS_C"/>
    <property type="match status" value="1"/>
</dbReference>
<dbReference type="SMART" id="SM00046">
    <property type="entry name" value="DAGKc"/>
    <property type="match status" value="1"/>
</dbReference>
<dbReference type="SUPFAM" id="SSF111331">
    <property type="entry name" value="NAD kinase/diacylglycerol kinase-like"/>
    <property type="match status" value="1"/>
</dbReference>
<dbReference type="PROSITE" id="PS50146">
    <property type="entry name" value="DAGK"/>
    <property type="match status" value="1"/>
</dbReference>
<name>Y1045_STRPN</name>
<reference key="1">
    <citation type="journal article" date="2001" name="Science">
        <title>Complete genome sequence of a virulent isolate of Streptococcus pneumoniae.</title>
        <authorList>
            <person name="Tettelin H."/>
            <person name="Nelson K.E."/>
            <person name="Paulsen I.T."/>
            <person name="Eisen J.A."/>
            <person name="Read T.D."/>
            <person name="Peterson S.N."/>
            <person name="Heidelberg J.F."/>
            <person name="DeBoy R.T."/>
            <person name="Haft D.H."/>
            <person name="Dodson R.J."/>
            <person name="Durkin A.S."/>
            <person name="Gwinn M.L."/>
            <person name="Kolonay J.F."/>
            <person name="Nelson W.C."/>
            <person name="Peterson J.D."/>
            <person name="Umayam L.A."/>
            <person name="White O."/>
            <person name="Salzberg S.L."/>
            <person name="Lewis M.R."/>
            <person name="Radune D."/>
            <person name="Holtzapple E.K."/>
            <person name="Khouri H.M."/>
            <person name="Wolf A.M."/>
            <person name="Utterback T.R."/>
            <person name="Hansen C.L."/>
            <person name="McDonald L.A."/>
            <person name="Feldblyum T.V."/>
            <person name="Angiuoli S.V."/>
            <person name="Dickinson T."/>
            <person name="Hickey E.K."/>
            <person name="Holt I.E."/>
            <person name="Loftus B.J."/>
            <person name="Yang F."/>
            <person name="Smith H.O."/>
            <person name="Venter J.C."/>
            <person name="Dougherty B.A."/>
            <person name="Morrison D.A."/>
            <person name="Hollingshead S.K."/>
            <person name="Fraser C.M."/>
        </authorList>
    </citation>
    <scope>NUCLEOTIDE SEQUENCE [LARGE SCALE GENOMIC DNA]</scope>
    <source>
        <strain>ATCC BAA-334 / TIGR4</strain>
    </source>
</reference>
<reference key="2">
    <citation type="journal article" date="2007" name="J. Biol. Chem.">
        <title>Identification of a soluble diacylglycerol kinase required for lipoteichoic acid production in Bacillus subtilis.</title>
        <authorList>
            <person name="Jerga A."/>
            <person name="Lu Y.-J."/>
            <person name="Schujman G.E."/>
            <person name="de Mendoza D."/>
            <person name="Rock C.O."/>
        </authorList>
    </citation>
    <scope>LACK OF FUNCTION AS A DIACYLGLYCEROL KINASE</scope>
</reference>
<gene>
    <name type="ordered locus">SP_1045</name>
</gene>
<feature type="chain" id="PRO_0000386523" description="Putative lipid kinase SP_1045">
    <location>
        <begin position="1"/>
        <end position="294"/>
    </location>
</feature>
<feature type="domain" description="DAGKc" evidence="2">
    <location>
        <begin position="1"/>
        <end position="131"/>
    </location>
</feature>
<feature type="active site" description="Proton acceptor" evidence="1">
    <location>
        <position position="269"/>
    </location>
</feature>
<feature type="binding site" evidence="2">
    <location>
        <begin position="9"/>
        <end position="13"/>
    </location>
    <ligand>
        <name>ATP</name>
        <dbReference type="ChEBI" id="CHEBI:30616"/>
    </ligand>
</feature>
<feature type="binding site" evidence="2">
    <location>
        <position position="40"/>
    </location>
    <ligand>
        <name>ATP</name>
        <dbReference type="ChEBI" id="CHEBI:30616"/>
    </ligand>
</feature>
<feature type="binding site" evidence="2">
    <location>
        <begin position="66"/>
        <end position="72"/>
    </location>
    <ligand>
        <name>ATP</name>
        <dbReference type="ChEBI" id="CHEBI:30616"/>
    </ligand>
</feature>
<feature type="binding site" evidence="2">
    <location>
        <position position="93"/>
    </location>
    <ligand>
        <name>ATP</name>
        <dbReference type="ChEBI" id="CHEBI:30616"/>
    </ligand>
</feature>
<feature type="binding site" evidence="1">
    <location>
        <position position="212"/>
    </location>
    <ligand>
        <name>Mg(2+)</name>
        <dbReference type="ChEBI" id="CHEBI:18420"/>
    </ligand>
</feature>
<feature type="binding site" evidence="1">
    <location>
        <position position="214"/>
    </location>
    <ligand>
        <name>Mg(2+)</name>
        <dbReference type="ChEBI" id="CHEBI:18420"/>
    </ligand>
</feature>
<proteinExistence type="evidence at protein level"/>
<keyword id="KW-0067">ATP-binding</keyword>
<keyword id="KW-0418">Kinase</keyword>
<keyword id="KW-0444">Lipid biosynthesis</keyword>
<keyword id="KW-0443">Lipid metabolism</keyword>
<keyword id="KW-0460">Magnesium</keyword>
<keyword id="KW-0479">Metal-binding</keyword>
<keyword id="KW-0547">Nucleotide-binding</keyword>
<keyword id="KW-0594">Phospholipid biosynthesis</keyword>
<keyword id="KW-1208">Phospholipid metabolism</keyword>
<keyword id="KW-1185">Reference proteome</keyword>
<keyword id="KW-0808">Transferase</keyword>
<comment type="function">
    <text>May catalyze the ATP-dependent phosphorylation of lipids other than diacylglycerol (DAG). In fact, is not able to exhibit diacylglycerol kinase activity in vitro.</text>
</comment>
<comment type="cofactor">
    <cofactor evidence="1">
        <name>Mg(2+)</name>
        <dbReference type="ChEBI" id="CHEBI:18420"/>
    </cofactor>
    <text evidence="1">Binds 1 Mg(2+) ion per subunit. This ion appears to have a structural role and is required for catalytic activity.</text>
</comment>
<comment type="similarity">
    <text evidence="3">Belongs to the diacylglycerol/lipid kinase family.</text>
</comment>